<reference key="1">
    <citation type="journal article" date="1998" name="Science">
        <title>Genome sequence of the nematode C. elegans: a platform for investigating biology.</title>
        <authorList>
            <consortium name="The C. elegans sequencing consortium"/>
        </authorList>
    </citation>
    <scope>NUCLEOTIDE SEQUENCE [LARGE SCALE GENOMIC DNA]</scope>
    <source>
        <strain>Bristol N2</strain>
    </source>
</reference>
<protein>
    <recommendedName>
        <fullName>Uncharacterized protein T07A5.7</fullName>
    </recommendedName>
</protein>
<dbReference type="EMBL" id="Z48055">
    <property type="protein sequence ID" value="CAO78722.2"/>
    <property type="molecule type" value="Genomic_DNA"/>
</dbReference>
<dbReference type="RefSeq" id="NP_001122718.2">
    <property type="nucleotide sequence ID" value="NM_001129246.4"/>
</dbReference>
<dbReference type="SMR" id="A6ZJ55"/>
<dbReference type="PaxDb" id="6239-T07A5.7"/>
<dbReference type="EnsemblMetazoa" id="T07A5.7.1">
    <property type="protein sequence ID" value="T07A5.7.1"/>
    <property type="gene ID" value="WBGene00045475"/>
</dbReference>
<dbReference type="GeneID" id="6418657"/>
<dbReference type="KEGG" id="cel:CELE_T07A5.7"/>
<dbReference type="UCSC" id="T07A5.7">
    <property type="organism name" value="c. elegans"/>
</dbReference>
<dbReference type="AGR" id="WB:WBGene00045475"/>
<dbReference type="CTD" id="6418657"/>
<dbReference type="WormBase" id="T07A5.7">
    <property type="protein sequence ID" value="CE43782"/>
    <property type="gene ID" value="WBGene00045475"/>
</dbReference>
<dbReference type="eggNOG" id="ENOG502THH7">
    <property type="taxonomic scope" value="Eukaryota"/>
</dbReference>
<dbReference type="HOGENOM" id="CLU_664381_0_0_1"/>
<dbReference type="InParanoid" id="A6ZJ55"/>
<dbReference type="OMA" id="NDISIGM"/>
<dbReference type="OrthoDB" id="5872978at2759"/>
<dbReference type="PRO" id="PR:A6ZJ55"/>
<dbReference type="Proteomes" id="UP000001940">
    <property type="component" value="Chromosome III"/>
</dbReference>
<dbReference type="Bgee" id="WBGene00045475">
    <property type="expression patterns" value="Expressed in adult organism"/>
</dbReference>
<dbReference type="GO" id="GO:0006486">
    <property type="term" value="P:protein glycosylation"/>
    <property type="evidence" value="ECO:0000318"/>
    <property type="project" value="GO_Central"/>
</dbReference>
<gene>
    <name type="ORF">T07A5.7</name>
</gene>
<organism>
    <name type="scientific">Caenorhabditis elegans</name>
    <dbReference type="NCBI Taxonomy" id="6239"/>
    <lineage>
        <taxon>Eukaryota</taxon>
        <taxon>Metazoa</taxon>
        <taxon>Ecdysozoa</taxon>
        <taxon>Nematoda</taxon>
        <taxon>Chromadorea</taxon>
        <taxon>Rhabditida</taxon>
        <taxon>Rhabditina</taxon>
        <taxon>Rhabditomorpha</taxon>
        <taxon>Rhabditoidea</taxon>
        <taxon>Rhabditidae</taxon>
        <taxon>Peloderinae</taxon>
        <taxon>Caenorhabditis</taxon>
    </lineage>
</organism>
<proteinExistence type="predicted"/>
<accession>A6ZJ55</accession>
<evidence type="ECO:0000255" key="1"/>
<evidence type="ECO:0000256" key="2">
    <source>
        <dbReference type="SAM" id="MobiDB-lite"/>
    </source>
</evidence>
<sequence length="420" mass="48998">MTNNQNELGDVMDVLEDNIGYLTDRDREIPETDVAVIKYSAWWEIPVLETEDPLDFLTIGNNQCPASDDWDKLLNAELYDMPRRSQANSESTPPEHTWSGTSELGNYHYSYNDISIGMDAMSMNNRNRDDGFSSSSSSSQTSEGSEWLPEETEFKPKKVVTSEPLSPTPPETETRRLTKVQRRSMTDQEVEQRRKEANKKNSKNYNFNKKSKEAKLKEDLEKNHLYIERATAQEKQTLERIMECYTYFGDGNVLVIHQDAMQNFTEKEVFEEKLEQVDMDVARAREQSQELKSLKKLYQKHRQAYITATNDKALKKSKINTYGSRKSRALHSMNIAELELKKCILQFKIKKFERREKLLEEVENQIKQYFNFKESNHAGYMRLPQERQNRFEELCKTLKTSSPKTSIAGSHRRSTRSSEN</sequence>
<name>YRT7_CAEEL</name>
<feature type="chain" id="PRO_0000316950" description="Uncharacterized protein T07A5.7">
    <location>
        <begin position="1"/>
        <end position="420"/>
    </location>
</feature>
<feature type="region of interest" description="Disordered" evidence="2">
    <location>
        <begin position="84"/>
        <end position="103"/>
    </location>
</feature>
<feature type="region of interest" description="Disordered" evidence="2">
    <location>
        <begin position="122"/>
        <end position="211"/>
    </location>
</feature>
<feature type="region of interest" description="Disordered" evidence="2">
    <location>
        <begin position="399"/>
        <end position="420"/>
    </location>
</feature>
<feature type="coiled-coil region" evidence="1">
    <location>
        <begin position="265"/>
        <end position="310"/>
    </location>
</feature>
<feature type="coiled-coil region" evidence="1">
    <location>
        <begin position="345"/>
        <end position="374"/>
    </location>
</feature>
<feature type="compositionally biased region" description="Polar residues" evidence="2">
    <location>
        <begin position="85"/>
        <end position="103"/>
    </location>
</feature>
<feature type="compositionally biased region" description="Basic and acidic residues" evidence="2">
    <location>
        <begin position="184"/>
        <end position="199"/>
    </location>
</feature>
<feature type="compositionally biased region" description="Polar residues" evidence="2">
    <location>
        <begin position="399"/>
        <end position="408"/>
    </location>
</feature>
<feature type="compositionally biased region" description="Basic residues" evidence="2">
    <location>
        <begin position="410"/>
        <end position="420"/>
    </location>
</feature>
<keyword id="KW-0175">Coiled coil</keyword>
<keyword id="KW-1185">Reference proteome</keyword>